<dbReference type="EMBL" id="AL123456">
    <property type="protein sequence ID" value="CCP44798.1"/>
    <property type="molecule type" value="Genomic_DNA"/>
</dbReference>
<dbReference type="PIR" id="H70941">
    <property type="entry name" value="H70941"/>
</dbReference>
<dbReference type="RefSeq" id="NP_216541.1">
    <property type="nucleotide sequence ID" value="NC_000962.3"/>
</dbReference>
<dbReference type="RefSeq" id="WP_003410146.1">
    <property type="nucleotide sequence ID" value="NZ_NVQJ01000046.1"/>
</dbReference>
<dbReference type="SMR" id="P9WGF5"/>
<dbReference type="FunCoup" id="P9WGF5">
    <property type="interactions" value="242"/>
</dbReference>
<dbReference type="STRING" id="83332.Rv2025c"/>
<dbReference type="PaxDb" id="83332-Rv2025c"/>
<dbReference type="DNASU" id="888782"/>
<dbReference type="GeneID" id="888782"/>
<dbReference type="KEGG" id="mtu:Rv2025c"/>
<dbReference type="KEGG" id="mtv:RVBD_2025c"/>
<dbReference type="TubercuList" id="Rv2025c"/>
<dbReference type="eggNOG" id="COG0053">
    <property type="taxonomic scope" value="Bacteria"/>
</dbReference>
<dbReference type="InParanoid" id="P9WGF5"/>
<dbReference type="OrthoDB" id="9813655at2"/>
<dbReference type="PhylomeDB" id="P9WGF5"/>
<dbReference type="Proteomes" id="UP000001584">
    <property type="component" value="Chromosome"/>
</dbReference>
<dbReference type="GO" id="GO:0005886">
    <property type="term" value="C:plasma membrane"/>
    <property type="evidence" value="ECO:0000318"/>
    <property type="project" value="GO_Central"/>
</dbReference>
<dbReference type="GO" id="GO:0015086">
    <property type="term" value="F:cadmium ion transmembrane transporter activity"/>
    <property type="evidence" value="ECO:0000318"/>
    <property type="project" value="GO_Central"/>
</dbReference>
<dbReference type="GO" id="GO:0015093">
    <property type="term" value="F:ferrous iron transmembrane transporter activity"/>
    <property type="evidence" value="ECO:0000318"/>
    <property type="project" value="GO_Central"/>
</dbReference>
<dbReference type="GO" id="GO:0015341">
    <property type="term" value="F:zinc efflux antiporter activity"/>
    <property type="evidence" value="ECO:0000318"/>
    <property type="project" value="GO_Central"/>
</dbReference>
<dbReference type="GO" id="GO:0006882">
    <property type="term" value="P:intracellular zinc ion homeostasis"/>
    <property type="evidence" value="ECO:0000318"/>
    <property type="project" value="GO_Central"/>
</dbReference>
<dbReference type="FunFam" id="3.30.70.1350:FF:000014">
    <property type="entry name" value="Cation efflux system protein"/>
    <property type="match status" value="1"/>
</dbReference>
<dbReference type="FunFam" id="1.20.1510.10:FF:000006">
    <property type="entry name" value="Divalent cation efflux transporter"/>
    <property type="match status" value="1"/>
</dbReference>
<dbReference type="Gene3D" id="1.20.1510.10">
    <property type="entry name" value="Cation efflux protein transmembrane domain"/>
    <property type="match status" value="1"/>
</dbReference>
<dbReference type="Gene3D" id="3.30.70.1350">
    <property type="entry name" value="Cation efflux protein, cytoplasmic domain"/>
    <property type="match status" value="1"/>
</dbReference>
<dbReference type="InterPro" id="IPR002524">
    <property type="entry name" value="Cation_efflux"/>
</dbReference>
<dbReference type="InterPro" id="IPR027470">
    <property type="entry name" value="Cation_efflux_CTD"/>
</dbReference>
<dbReference type="InterPro" id="IPR036837">
    <property type="entry name" value="Cation_efflux_CTD_sf"/>
</dbReference>
<dbReference type="InterPro" id="IPR027469">
    <property type="entry name" value="Cation_efflux_TMD_sf"/>
</dbReference>
<dbReference type="InterPro" id="IPR050291">
    <property type="entry name" value="CDF_Transporter"/>
</dbReference>
<dbReference type="NCBIfam" id="TIGR01297">
    <property type="entry name" value="CDF"/>
    <property type="match status" value="1"/>
</dbReference>
<dbReference type="PANTHER" id="PTHR43840">
    <property type="entry name" value="MITOCHONDRIAL METAL TRANSPORTER 1-RELATED"/>
    <property type="match status" value="1"/>
</dbReference>
<dbReference type="PANTHER" id="PTHR43840:SF15">
    <property type="entry name" value="MITOCHONDRIAL METAL TRANSPORTER 1-RELATED"/>
    <property type="match status" value="1"/>
</dbReference>
<dbReference type="Pfam" id="PF01545">
    <property type="entry name" value="Cation_efflux"/>
    <property type="match status" value="1"/>
</dbReference>
<dbReference type="Pfam" id="PF16916">
    <property type="entry name" value="ZT_dimer"/>
    <property type="match status" value="1"/>
</dbReference>
<dbReference type="SUPFAM" id="SSF160240">
    <property type="entry name" value="Cation efflux protein cytoplasmic domain-like"/>
    <property type="match status" value="1"/>
</dbReference>
<dbReference type="SUPFAM" id="SSF161111">
    <property type="entry name" value="Cation efflux protein transmembrane domain-like"/>
    <property type="match status" value="1"/>
</dbReference>
<feature type="chain" id="PRO_0000419181" description="Probable cation efflux system protein Rv2025c">
    <location>
        <begin position="1"/>
        <end position="332"/>
    </location>
</feature>
<feature type="transmembrane region" description="Helical" evidence="1">
    <location>
        <begin position="46"/>
        <end position="66"/>
    </location>
</feature>
<feature type="transmembrane region" description="Helical" evidence="1">
    <location>
        <begin position="75"/>
        <end position="95"/>
    </location>
</feature>
<feature type="transmembrane region" description="Helical" evidence="1">
    <location>
        <begin position="113"/>
        <end position="133"/>
    </location>
</feature>
<feature type="transmembrane region" description="Helical" evidence="1">
    <location>
        <begin position="145"/>
        <end position="165"/>
    </location>
</feature>
<feature type="transmembrane region" description="Helical" evidence="1">
    <location>
        <begin position="202"/>
        <end position="222"/>
    </location>
</feature>
<organism>
    <name type="scientific">Mycobacterium tuberculosis (strain ATCC 25618 / H37Rv)</name>
    <dbReference type="NCBI Taxonomy" id="83332"/>
    <lineage>
        <taxon>Bacteria</taxon>
        <taxon>Bacillati</taxon>
        <taxon>Actinomycetota</taxon>
        <taxon>Actinomycetes</taxon>
        <taxon>Mycobacteriales</taxon>
        <taxon>Mycobacteriaceae</taxon>
        <taxon>Mycobacterium</taxon>
        <taxon>Mycobacterium tuberculosis complex</taxon>
    </lineage>
</organism>
<keyword id="KW-1003">Cell membrane</keyword>
<keyword id="KW-0406">Ion transport</keyword>
<keyword id="KW-0472">Membrane</keyword>
<keyword id="KW-1185">Reference proteome</keyword>
<keyword id="KW-0812">Transmembrane</keyword>
<keyword id="KW-1133">Transmembrane helix</keyword>
<keyword id="KW-0813">Transport</keyword>
<protein>
    <recommendedName>
        <fullName>Probable cation efflux system protein Rv2025c</fullName>
    </recommendedName>
</protein>
<evidence type="ECO:0000255" key="1"/>
<evidence type="ECO:0000269" key="2">
    <source>
    </source>
</evidence>
<evidence type="ECO:0000305" key="3"/>
<comment type="subcellular location">
    <subcellularLocation>
        <location evidence="3">Cell membrane</location>
        <topology evidence="3">Multi-pass membrane protein</topology>
    </subcellularLocation>
</comment>
<comment type="induction">
    <text evidence="2">Transcription is repressed by KmtR. Induced by nickel and cobalt.</text>
</comment>
<comment type="similarity">
    <text evidence="3">Belongs to the cation diffusion facilitator (CDF) transporter (TC 2.A.4) family.</text>
</comment>
<proteinExistence type="evidence at protein level"/>
<gene>
    <name type="ordered locus">Rv2025c</name>
</gene>
<name>Y2025_MYCTU</name>
<sequence length="332" mass="35207">MTHDHAHSRGVPAMIKEIFAPHSHDAADSVDDTLESTAAGIRTVKISLLVLGLTALIQIVIVVMSGSVALAADTIHNFADALTAVPLWIAFALGAKPATRRYTYGFGRVEDLAGSFVVAMITMSAIIAGYEAIARLIHPQQIEHVGWVALAGLVGFIGNEWVALYRIRVGHRIGSAALIADGLHARTDGFTSLAVLCSAGGVALGFPLADPIVGLLITAAILAVLRTAARDVFRRLLDGVDPAMVDAAEQALAARPGVQAVRSVRMRWIGHRLHADAELDVDPALDLAQAHRIAHDAEHELTHTVPKLTTALIHAYPAEHGSSIPDRGRTVE</sequence>
<accession>P9WGF5</accession>
<accession>F2GG63</accession>
<accession>L0T8K1</accession>
<accession>O53471</accession>
<accession>Q7D7L8</accession>
<reference key="1">
    <citation type="journal article" date="1998" name="Nature">
        <title>Deciphering the biology of Mycobacterium tuberculosis from the complete genome sequence.</title>
        <authorList>
            <person name="Cole S.T."/>
            <person name="Brosch R."/>
            <person name="Parkhill J."/>
            <person name="Garnier T."/>
            <person name="Churcher C.M."/>
            <person name="Harris D.E."/>
            <person name="Gordon S.V."/>
            <person name="Eiglmeier K."/>
            <person name="Gas S."/>
            <person name="Barry C.E. III"/>
            <person name="Tekaia F."/>
            <person name="Badcock K."/>
            <person name="Basham D."/>
            <person name="Brown D."/>
            <person name="Chillingworth T."/>
            <person name="Connor R."/>
            <person name="Davies R.M."/>
            <person name="Devlin K."/>
            <person name="Feltwell T."/>
            <person name="Gentles S."/>
            <person name="Hamlin N."/>
            <person name="Holroyd S."/>
            <person name="Hornsby T."/>
            <person name="Jagels K."/>
            <person name="Krogh A."/>
            <person name="McLean J."/>
            <person name="Moule S."/>
            <person name="Murphy L.D."/>
            <person name="Oliver S."/>
            <person name="Osborne J."/>
            <person name="Quail M.A."/>
            <person name="Rajandream M.A."/>
            <person name="Rogers J."/>
            <person name="Rutter S."/>
            <person name="Seeger K."/>
            <person name="Skelton S."/>
            <person name="Squares S."/>
            <person name="Squares R."/>
            <person name="Sulston J.E."/>
            <person name="Taylor K."/>
            <person name="Whitehead S."/>
            <person name="Barrell B.G."/>
        </authorList>
    </citation>
    <scope>NUCLEOTIDE SEQUENCE [LARGE SCALE GENOMIC DNA]</scope>
    <source>
        <strain>ATCC 25618 / H37Rv</strain>
    </source>
</reference>
<reference key="2">
    <citation type="journal article" date="2007" name="J. Biol. Chem.">
        <title>Mycobacterial cells have dual nickel-cobalt sensors: sequence relationships and metal sites of metal-responsive repressors are not congruent.</title>
        <authorList>
            <person name="Campbell D.R."/>
            <person name="Chapman K.E."/>
            <person name="Waldron K.J."/>
            <person name="Tottey S."/>
            <person name="Kendall S."/>
            <person name="Cavallaro G."/>
            <person name="Andreini C."/>
            <person name="Hinds J."/>
            <person name="Stoker N.G."/>
            <person name="Robinson N.J."/>
            <person name="Cavet J.S."/>
        </authorList>
    </citation>
    <scope>INDUCTION</scope>
    <source>
        <strain>ATCC 25618 / H37Rv</strain>
    </source>
</reference>
<reference key="3">
    <citation type="journal article" date="2011" name="Mol. Cell. Proteomics">
        <title>Proteogenomic analysis of Mycobacterium tuberculosis by high resolution mass spectrometry.</title>
        <authorList>
            <person name="Kelkar D.S."/>
            <person name="Kumar D."/>
            <person name="Kumar P."/>
            <person name="Balakrishnan L."/>
            <person name="Muthusamy B."/>
            <person name="Yadav A.K."/>
            <person name="Shrivastava P."/>
            <person name="Marimuthu A."/>
            <person name="Anand S."/>
            <person name="Sundaram H."/>
            <person name="Kingsbury R."/>
            <person name="Harsha H.C."/>
            <person name="Nair B."/>
            <person name="Prasad T.S."/>
            <person name="Chauhan D.S."/>
            <person name="Katoch K."/>
            <person name="Katoch V.M."/>
            <person name="Kumar P."/>
            <person name="Chaerkady R."/>
            <person name="Ramachandran S."/>
            <person name="Dash D."/>
            <person name="Pandey A."/>
        </authorList>
    </citation>
    <scope>IDENTIFICATION BY MASS SPECTROMETRY [LARGE SCALE ANALYSIS]</scope>
    <source>
        <strain>ATCC 25618 / H37Rv</strain>
    </source>
</reference>